<comment type="function">
    <text>In the hair cortex, hair keratin intermediate filaments are embedded in an interfilamentous matrix, consisting of hair keratin-associated proteins (KRTAP), which are essential for the formation of a rigid and resistant hair shaft through their extensive disulfide bond cross-linking with abundant cysteine residues of hair keratins. The matrix proteins include the high-sulfur and high-glycine-tyrosine keratins.</text>
</comment>
<comment type="subunit">
    <text evidence="1">Interacts with hair keratins.</text>
</comment>
<comment type="interaction">
    <interactant intactId="EBI-22311199">
        <id>Q3LI67</id>
    </interactant>
    <interactant intactId="EBI-10173507">
        <id>Q6UY14-3</id>
        <label>ADAMTSL4</label>
    </interactant>
    <organismsDiffer>false</organismsDiffer>
    <experiments>3</experiments>
</comment>
<comment type="interaction">
    <interactant intactId="EBI-22311199">
        <id>Q3LI67</id>
    </interactant>
    <interactant intactId="EBI-727098">
        <id>P21549</id>
        <label>AGXT</label>
    </interactant>
    <organismsDiffer>false</organismsDiffer>
    <experiments>3</experiments>
</comment>
<comment type="interaction">
    <interactant intactId="EBI-22311199">
        <id>Q3LI67</id>
    </interactant>
    <interactant intactId="EBI-948603">
        <id>Q03989</id>
        <label>ARID5A</label>
    </interactant>
    <organismsDiffer>false</organismsDiffer>
    <experiments>3</experiments>
</comment>
<comment type="interaction">
    <interactant intactId="EBI-22311199">
        <id>Q3LI67</id>
    </interactant>
    <interactant intactId="EBI-742909">
        <id>Q9H6L4</id>
        <label>ARMC7</label>
    </interactant>
    <organismsDiffer>false</organismsDiffer>
    <experiments>3</experiments>
</comment>
<comment type="interaction">
    <interactant intactId="EBI-22311199">
        <id>Q3LI67</id>
    </interactant>
    <interactant intactId="EBI-745689">
        <id>Q7L5A3</id>
        <label>ATOSB</label>
    </interactant>
    <organismsDiffer>false</organismsDiffer>
    <experiments>3</experiments>
</comment>
<comment type="interaction">
    <interactant intactId="EBI-22311199">
        <id>Q3LI67</id>
    </interactant>
    <interactant intactId="EBI-1166928">
        <id>Q8N5M1</id>
        <label>ATPAF2</label>
    </interactant>
    <organismsDiffer>false</organismsDiffer>
    <experiments>3</experiments>
</comment>
<comment type="interaction">
    <interactant intactId="EBI-22311199">
        <id>Q3LI67</id>
    </interactant>
    <interactant intactId="EBI-12140769">
        <id>Q8WXX7-2</id>
        <label>AUTS2</label>
    </interactant>
    <organismsDiffer>false</organismsDiffer>
    <experiments>3</experiments>
</comment>
<comment type="interaction">
    <interactant intactId="EBI-22311199">
        <id>Q3LI67</id>
    </interactant>
    <interactant intactId="EBI-2949658">
        <id>O95429</id>
        <label>BAG4</label>
    </interactant>
    <organismsDiffer>false</organismsDiffer>
    <experiments>5</experiments>
</comment>
<comment type="interaction">
    <interactant intactId="EBI-22311199">
        <id>Q3LI67</id>
    </interactant>
    <interactant intactId="EBI-745073">
        <id>Q9BXY8</id>
        <label>BEX2</label>
    </interactant>
    <organismsDiffer>false</organismsDiffer>
    <experiments>3</experiments>
</comment>
<comment type="interaction">
    <interactant intactId="EBI-22311199">
        <id>Q3LI67</id>
    </interactant>
    <interactant intactId="EBI-11532900">
        <id>J3KQ12</id>
        <label>BSCL2</label>
    </interactant>
    <organismsDiffer>false</organismsDiffer>
    <experiments>3</experiments>
</comment>
<comment type="interaction">
    <interactant intactId="EBI-22311199">
        <id>Q3LI67</id>
    </interactant>
    <interactant intactId="EBI-6660291">
        <id>Q6NUJ2</id>
        <label>C11orf87</label>
    </interactant>
    <organismsDiffer>false</organismsDiffer>
    <experiments>3</experiments>
</comment>
<comment type="interaction">
    <interactant intactId="EBI-22311199">
        <id>Q3LI67</id>
    </interactant>
    <interactant intactId="EBI-1383687">
        <id>Q9UQM7</id>
        <label>CAMK2A</label>
    </interactant>
    <organismsDiffer>false</organismsDiffer>
    <experiments>3</experiments>
</comment>
<comment type="interaction">
    <interactant intactId="EBI-22311199">
        <id>Q3LI67</id>
    </interactant>
    <interactant intactId="EBI-11523526">
        <id>Q13554-3</id>
        <label>CAMK2B</label>
    </interactant>
    <organismsDiffer>false</organismsDiffer>
    <experiments>3</experiments>
</comment>
<comment type="interaction">
    <interactant intactId="EBI-22311199">
        <id>Q3LI67</id>
    </interactant>
    <interactant intactId="EBI-12020154">
        <id>Q13555-5</id>
        <label>CAMK2G</label>
    </interactant>
    <organismsDiffer>false</organismsDiffer>
    <experiments>3</experiments>
</comment>
<comment type="interaction">
    <interactant intactId="EBI-22311199">
        <id>Q3LI67</id>
    </interactant>
    <interactant intactId="EBI-718719">
        <id>Q9Y2V2</id>
        <label>CARHSP1</label>
    </interactant>
    <organismsDiffer>false</organismsDiffer>
    <experiments>3</experiments>
</comment>
<comment type="interaction">
    <interactant intactId="EBI-22311199">
        <id>Q3LI67</id>
    </interactant>
    <interactant intactId="EBI-744556">
        <id>Q96HB5</id>
        <label>CCDC120</label>
    </interactant>
    <organismsDiffer>false</organismsDiffer>
    <experiments>3</experiments>
</comment>
<comment type="interaction">
    <interactant intactId="EBI-22311199">
        <id>Q3LI67</id>
    </interactant>
    <interactant intactId="EBI-1104933">
        <id>Q8N4L8</id>
        <label>CCDC24</label>
    </interactant>
    <organismsDiffer>false</organismsDiffer>
    <experiments>3</experiments>
</comment>
<comment type="interaction">
    <interactant intactId="EBI-22311199">
        <id>Q3LI67</id>
    </interactant>
    <interactant intactId="EBI-746041">
        <id>Q8TC90</id>
        <label>CCER1</label>
    </interactant>
    <organismsDiffer>false</organismsDiffer>
    <experiments>3</experiments>
</comment>
<comment type="interaction">
    <interactant intactId="EBI-22311199">
        <id>Q3LI67</id>
    </interactant>
    <interactant intactId="EBI-12139335">
        <id>Q8N6W0</id>
        <label>CELF5</label>
    </interactant>
    <organismsDiffer>false</organismsDiffer>
    <experiments>3</experiments>
</comment>
<comment type="interaction">
    <interactant intactId="EBI-22311199">
        <id>Q3LI67</id>
    </interactant>
    <interactant intactId="EBI-947551">
        <id>Q9H2X0</id>
        <label>CHRD</label>
    </interactant>
    <organismsDiffer>false</organismsDiffer>
    <experiments>3</experiments>
</comment>
<comment type="interaction">
    <interactant intactId="EBI-22311199">
        <id>Q3LI67</id>
    </interactant>
    <interactant intactId="EBI-11980535">
        <id>P51800-3</id>
        <label>CLCNKA</label>
    </interactant>
    <organismsDiffer>false</organismsDiffer>
    <experiments>3</experiments>
</comment>
<comment type="interaction">
    <interactant intactId="EBI-22311199">
        <id>Q3LI67</id>
    </interactant>
    <interactant intactId="EBI-741032">
        <id>Q8NE01</id>
        <label>CNNM3</label>
    </interactant>
    <organismsDiffer>false</organismsDiffer>
    <experiments>3</experiments>
</comment>
<comment type="interaction">
    <interactant intactId="EBI-22311199">
        <id>Q3LI67</id>
    </interactant>
    <interactant intactId="EBI-747133">
        <id>P27658</id>
        <label>COL8A1</label>
    </interactant>
    <organismsDiffer>false</organismsDiffer>
    <experiments>3</experiments>
</comment>
<comment type="interaction">
    <interactant intactId="EBI-22311199">
        <id>Q3LI67</id>
    </interactant>
    <interactant intactId="EBI-10192698">
        <id>Q02930-3</id>
        <label>CREB5</label>
    </interactant>
    <organismsDiffer>false</organismsDiffer>
    <experiments>3</experiments>
</comment>
<comment type="interaction">
    <interactant intactId="EBI-22311199">
        <id>Q3LI67</id>
    </interactant>
    <interactant intactId="EBI-2212355">
        <id>Q49AN0</id>
        <label>CRY2</label>
    </interactant>
    <organismsDiffer>false</organismsDiffer>
    <experiments>3</experiments>
</comment>
<comment type="interaction">
    <interactant intactId="EBI-22311199">
        <id>Q3LI67</id>
    </interactant>
    <interactant intactId="EBI-8636823">
        <id>Q9UBR2</id>
        <label>CTSZ</label>
    </interactant>
    <organismsDiffer>false</organismsDiffer>
    <experiments>3</experiments>
</comment>
<comment type="interaction">
    <interactant intactId="EBI-22311199">
        <id>Q3LI67</id>
    </interactant>
    <interactant intactId="EBI-3867333">
        <id>A8MQ03</id>
        <label>CYSRT1</label>
    </interactant>
    <organismsDiffer>false</organismsDiffer>
    <experiments>3</experiments>
</comment>
<comment type="interaction">
    <interactant intactId="EBI-22311199">
        <id>Q3LI67</id>
    </interactant>
    <interactant intactId="EBI-9090939">
        <id>Q5D0E6-2</id>
        <label>DALRD3</label>
    </interactant>
    <organismsDiffer>false</organismsDiffer>
    <experiments>3</experiments>
</comment>
<comment type="interaction">
    <interactant intactId="EBI-22311199">
        <id>Q3LI67</id>
    </interactant>
    <interactant intactId="EBI-746300">
        <id>Q96LJ7</id>
        <label>DHRS1</label>
    </interactant>
    <organismsDiffer>false</organismsDiffer>
    <experiments>3</experiments>
</comment>
<comment type="interaction">
    <interactant intactId="EBI-22311199">
        <id>Q3LI67</id>
    </interactant>
    <interactant intactId="EBI-9679045">
        <id>Q9NQL9</id>
        <label>DMRT3</label>
    </interactant>
    <organismsDiffer>false</organismsDiffer>
    <experiments>3</experiments>
</comment>
<comment type="interaction">
    <interactant intactId="EBI-22311199">
        <id>Q3LI67</id>
    </interactant>
    <interactant intactId="EBI-3943864">
        <id>Q8N9I5</id>
        <label>FADS6</label>
    </interactant>
    <organismsDiffer>false</organismsDiffer>
    <experiments>3</experiments>
</comment>
<comment type="interaction">
    <interactant intactId="EBI-22311199">
        <id>Q3LI67</id>
    </interactant>
    <interactant intactId="EBI-1384254">
        <id>Q86UY5</id>
        <label>FAM83A</label>
    </interactant>
    <organismsDiffer>false</organismsDiffer>
    <experiments>3</experiments>
</comment>
<comment type="interaction">
    <interactant intactId="EBI-22311199">
        <id>Q3LI67</id>
    </interactant>
    <interactant intactId="EBI-741068">
        <id>Q969U6</id>
        <label>FBXW5</label>
    </interactant>
    <organismsDiffer>false</organismsDiffer>
    <experiments>3</experiments>
</comment>
<comment type="interaction">
    <interactant intactId="EBI-22311199">
        <id>Q3LI67</id>
    </interactant>
    <interactant intactId="EBI-11977403">
        <id>A0A0C3SFZ9</id>
        <label>FCHO1</label>
    </interactant>
    <organismsDiffer>false</organismsDiffer>
    <experiments>3</experiments>
</comment>
<comment type="interaction">
    <interactant intactId="EBI-22311199">
        <id>Q3LI67</id>
    </interactant>
    <interactant intactId="EBI-17282008">
        <id>O60548</id>
        <label>FOXD2</label>
    </interactant>
    <organismsDiffer>false</organismsDiffer>
    <experiments>3</experiments>
</comment>
<comment type="interaction">
    <interactant intactId="EBI-22311199">
        <id>Q3LI67</id>
    </interactant>
    <interactant intactId="EBI-11320806">
        <id>Q9NU39</id>
        <label>FOXD4L1</label>
    </interactant>
    <organismsDiffer>false</organismsDiffer>
    <experiments>3</experiments>
</comment>
<comment type="interaction">
    <interactant intactId="EBI-22311199">
        <id>Q3LI67</id>
    </interactant>
    <interactant intactId="EBI-2806671">
        <id>P23769</id>
        <label>GATA2</label>
    </interactant>
    <organismsDiffer>false</organismsDiffer>
    <experiments>3</experiments>
</comment>
<comment type="interaction">
    <interactant intactId="EBI-22311199">
        <id>Q3LI67</id>
    </interactant>
    <interactant intactId="EBI-6672518">
        <id>P23771-2</id>
        <label>GATA3</label>
    </interactant>
    <organismsDiffer>false</organismsDiffer>
    <experiments>3</experiments>
</comment>
<comment type="interaction">
    <interactant intactId="EBI-22311199">
        <id>Q3LI67</id>
    </interactant>
    <interactant intactId="EBI-748515">
        <id>Q8IVS8</id>
        <label>GLYCTK</label>
    </interactant>
    <organismsDiffer>false</organismsDiffer>
    <experiments>3</experiments>
</comment>
<comment type="interaction">
    <interactant intactId="EBI-22311199">
        <id>Q3LI67</id>
    </interactant>
    <interactant intactId="EBI-11975289">
        <id>Q9Y223-2</id>
        <label>GNE</label>
    </interactant>
    <organismsDiffer>false</organismsDiffer>
    <experiments>3</experiments>
</comment>
<comment type="interaction">
    <interactant intactId="EBI-22311199">
        <id>Q3LI67</id>
    </interactant>
    <interactant intactId="EBI-713355">
        <id>Q13227</id>
        <label>GPS2</label>
    </interactant>
    <organismsDiffer>false</organismsDiffer>
    <experiments>3</experiments>
</comment>
<comment type="interaction">
    <interactant intactId="EBI-22311199">
        <id>Q3LI67</id>
    </interactant>
    <interactant intactId="EBI-11956675">
        <id>Q9GZV7</id>
        <label>HAPLN2</label>
    </interactant>
    <organismsDiffer>false</organismsDiffer>
    <experiments>3</experiments>
</comment>
<comment type="interaction">
    <interactant intactId="EBI-22311199">
        <id>Q3LI67</id>
    </interactant>
    <interactant intactId="EBI-747421">
        <id>Q03014</id>
        <label>HHEX</label>
    </interactant>
    <organismsDiffer>false</organismsDiffer>
    <experiments>3</experiments>
</comment>
<comment type="interaction">
    <interactant intactId="EBI-22311199">
        <id>Q3LI67</id>
    </interactant>
    <interactant intactId="EBI-740785">
        <id>P49639</id>
        <label>HOXA1</label>
    </interactant>
    <organismsDiffer>false</organismsDiffer>
    <experiments>6</experiments>
</comment>
<comment type="interaction">
    <interactant intactId="EBI-22311199">
        <id>Q3LI67</id>
    </interactant>
    <interactant intactId="EBI-3893317">
        <id>P09067</id>
        <label>HOXB5</label>
    </interactant>
    <organismsDiffer>false</organismsDiffer>
    <experiments>3</experiments>
</comment>
<comment type="interaction">
    <interactant intactId="EBI-22311199">
        <id>Q3LI67</id>
    </interactant>
    <interactant intactId="EBI-745290">
        <id>P17482</id>
        <label>HOXB9</label>
    </interactant>
    <organismsDiffer>false</organismsDiffer>
    <experiments>3</experiments>
</comment>
<comment type="interaction">
    <interactant intactId="EBI-22311199">
        <id>Q3LI67</id>
    </interactant>
    <interactant intactId="EBI-1752118">
        <id>P31273</id>
        <label>HOXC8</label>
    </interactant>
    <organismsDiffer>false</organismsDiffer>
    <experiments>3</experiments>
</comment>
<comment type="interaction">
    <interactant intactId="EBI-22311199">
        <id>Q3LI67</id>
    </interactant>
    <interactant intactId="EBI-2880706">
        <id>O43593</id>
        <label>HR</label>
    </interactant>
    <organismsDiffer>false</organismsDiffer>
    <experiments>3</experiments>
</comment>
<comment type="interaction">
    <interactant intactId="EBI-22311199">
        <id>Q3LI67</id>
    </interactant>
    <interactant intactId="EBI-2806068">
        <id>Q12891</id>
        <label>HYAL2</label>
    </interactant>
    <organismsDiffer>false</organismsDiffer>
    <experiments>3</experiments>
</comment>
<comment type="interaction">
    <interactant intactId="EBI-22311199">
        <id>Q3LI67</id>
    </interactant>
    <interactant intactId="EBI-357925">
        <id>Q12905</id>
        <label>ILF2</label>
    </interactant>
    <organismsDiffer>false</organismsDiffer>
    <experiments>3</experiments>
</comment>
<comment type="interaction">
    <interactant intactId="EBI-22311199">
        <id>Q3LI67</id>
    </interactant>
    <interactant intactId="EBI-6509505">
        <id>Q0VD86</id>
        <label>INCA1</label>
    </interactant>
    <organismsDiffer>false</organismsDiffer>
    <experiments>3</experiments>
</comment>
<comment type="interaction">
    <interactant intactId="EBI-22311199">
        <id>Q3LI67</id>
    </interactant>
    <interactant intactId="EBI-9092209">
        <id>Q92835-2</id>
        <label>INPP5D</label>
    </interactant>
    <organismsDiffer>false</organismsDiffer>
    <experiments>3</experiments>
</comment>
<comment type="interaction">
    <interactant intactId="EBI-22311199">
        <id>Q3LI67</id>
    </interactant>
    <interactant intactId="EBI-11051601">
        <id>P16144-2</id>
        <label>ITGB4</label>
    </interactant>
    <organismsDiffer>false</organismsDiffer>
    <experiments>3</experiments>
</comment>
<comment type="interaction">
    <interactant intactId="EBI-22311199">
        <id>Q3LI67</id>
    </interactant>
    <interactant intactId="EBI-2556193">
        <id>Q63ZY3</id>
        <label>KANK2</label>
    </interactant>
    <organismsDiffer>false</organismsDiffer>
    <experiments>3</experiments>
</comment>
<comment type="interaction">
    <interactant intactId="EBI-22311199">
        <id>Q3LI67</id>
    </interactant>
    <interactant intactId="EBI-10981970">
        <id>Q5T749</id>
        <label>KPRP</label>
    </interactant>
    <organismsDiffer>false</organismsDiffer>
    <experiments>6</experiments>
</comment>
<comment type="interaction">
    <interactant intactId="EBI-22311199">
        <id>Q3LI67</id>
    </interactant>
    <interactant intactId="EBI-742094">
        <id>P35900</id>
        <label>KRT20</label>
    </interactant>
    <organismsDiffer>false</organismsDiffer>
    <experiments>3</experiments>
</comment>
<comment type="interaction">
    <interactant intactId="EBI-22311199">
        <id>Q3LI67</id>
    </interactant>
    <interactant intactId="EBI-1052037">
        <id>Q8IUC1</id>
        <label>KRTAP11-1</label>
    </interactant>
    <organismsDiffer>false</organismsDiffer>
    <experiments>3</experiments>
</comment>
<comment type="interaction">
    <interactant intactId="EBI-22311199">
        <id>Q3LI67</id>
    </interactant>
    <interactant intactId="EBI-10176379">
        <id>P59991</id>
        <label>KRTAP12-2</label>
    </interactant>
    <organismsDiffer>false</organismsDiffer>
    <experiments>3</experiments>
</comment>
<comment type="interaction">
    <interactant intactId="EBI-22311199">
        <id>Q3LI67</id>
    </interactant>
    <interactant intactId="EBI-12196745">
        <id>Q3LHN2</id>
        <label>KRTAP19-2</label>
    </interactant>
    <organismsDiffer>false</organismsDiffer>
    <experiments>3</experiments>
</comment>
<comment type="interaction">
    <interactant intactId="EBI-22311199">
        <id>Q3LI67</id>
    </interactant>
    <interactant intactId="EBI-1048945">
        <id>Q3LI72</id>
        <label>KRTAP19-5</label>
    </interactant>
    <organismsDiffer>false</organismsDiffer>
    <experiments>3</experiments>
</comment>
<comment type="interaction">
    <interactant intactId="EBI-22311199">
        <id>Q3LI67</id>
    </interactant>
    <interactant intactId="EBI-12805508">
        <id>Q3LI70</id>
        <label>KRTAP19-6</label>
    </interactant>
    <organismsDiffer>false</organismsDiffer>
    <experiments>3</experiments>
</comment>
<comment type="interaction">
    <interactant intactId="EBI-22311199">
        <id>Q3LI67</id>
    </interactant>
    <interactant intactId="EBI-10241353">
        <id>Q3SYF9</id>
        <label>KRTAP19-7</label>
    </interactant>
    <organismsDiffer>false</organismsDiffer>
    <experiments>3</experiments>
</comment>
<comment type="interaction">
    <interactant intactId="EBI-22311199">
        <id>Q3LI67</id>
    </interactant>
    <interactant intactId="EBI-3957672">
        <id>Q6PEX3</id>
        <label>KRTAP26-1</label>
    </interactant>
    <organismsDiffer>false</organismsDiffer>
    <experiments>3</experiments>
</comment>
<comment type="interaction">
    <interactant intactId="EBI-22311199">
        <id>Q3LI67</id>
    </interactant>
    <interactant intactId="EBI-11958132">
        <id>Q9BYR3</id>
        <label>KRTAP4-4</label>
    </interactant>
    <organismsDiffer>false</organismsDiffer>
    <experiments>3</experiments>
</comment>
<comment type="interaction">
    <interactant intactId="EBI-22311199">
        <id>Q3LI67</id>
    </interactant>
    <interactant intactId="EBI-12111050">
        <id>Q3LI64</id>
        <label>KRTAP6-1</label>
    </interactant>
    <organismsDiffer>false</organismsDiffer>
    <experiments>3</experiments>
</comment>
<comment type="interaction">
    <interactant intactId="EBI-22311199">
        <id>Q3LI67</id>
    </interactant>
    <interactant intactId="EBI-11962084">
        <id>Q3LI66</id>
        <label>KRTAP6-2</label>
    </interactant>
    <organismsDiffer>false</organismsDiffer>
    <experiments>3</experiments>
</comment>
<comment type="interaction">
    <interactant intactId="EBI-22311199">
        <id>Q3LI67</id>
    </interactant>
    <interactant intactId="EBI-1052105">
        <id>Q14657</id>
        <label>LAGE3</label>
    </interactant>
    <organismsDiffer>false</organismsDiffer>
    <experiments>3</experiments>
</comment>
<comment type="interaction">
    <interactant intactId="EBI-22311199">
        <id>Q3LI67</id>
    </interactant>
    <interactant intactId="EBI-10245913">
        <id>Q5T7P3</id>
        <label>LCE1B</label>
    </interactant>
    <organismsDiffer>false</organismsDiffer>
    <experiments>3</experiments>
</comment>
<comment type="interaction">
    <interactant intactId="EBI-22311199">
        <id>Q3LI67</id>
    </interactant>
    <interactant intactId="EBI-12224199">
        <id>Q5T751</id>
        <label>LCE1C</label>
    </interactant>
    <organismsDiffer>false</organismsDiffer>
    <experiments>3</experiments>
</comment>
<comment type="interaction">
    <interactant intactId="EBI-22311199">
        <id>Q3LI67</id>
    </interactant>
    <interactant intactId="EBI-11955335">
        <id>Q5T753</id>
        <label>LCE1E</label>
    </interactant>
    <organismsDiffer>false</organismsDiffer>
    <experiments>3</experiments>
</comment>
<comment type="interaction">
    <interactant intactId="EBI-22311199">
        <id>Q3LI67</id>
    </interactant>
    <interactant intactId="EBI-11958008">
        <id>Q5T754</id>
        <label>LCE1F</label>
    </interactant>
    <organismsDiffer>false</organismsDiffer>
    <experiments>6</experiments>
</comment>
<comment type="interaction">
    <interactant intactId="EBI-22311199">
        <id>Q3LI67</id>
    </interactant>
    <interactant intactId="EBI-10246607">
        <id>Q5TA79</id>
        <label>LCE2A</label>
    </interactant>
    <organismsDiffer>false</organismsDiffer>
    <experiments>3</experiments>
</comment>
<comment type="interaction">
    <interactant intactId="EBI-22311199">
        <id>Q3LI67</id>
    </interactant>
    <interactant intactId="EBI-11478468">
        <id>O14633</id>
        <label>LCE2B</label>
    </interactant>
    <organismsDiffer>false</organismsDiffer>
    <experiments>6</experiments>
</comment>
<comment type="interaction">
    <interactant intactId="EBI-22311199">
        <id>Q3LI67</id>
    </interactant>
    <interactant intactId="EBI-11973993">
        <id>Q5TA81</id>
        <label>LCE2C</label>
    </interactant>
    <organismsDiffer>false</organismsDiffer>
    <experiments>3</experiments>
</comment>
<comment type="interaction">
    <interactant intactId="EBI-22311199">
        <id>Q3LI67</id>
    </interactant>
    <interactant intactId="EBI-9394625">
        <id>Q5TA76</id>
        <label>LCE3A</label>
    </interactant>
    <organismsDiffer>false</organismsDiffer>
    <experiments>3</experiments>
</comment>
<comment type="interaction">
    <interactant intactId="EBI-22311199">
        <id>Q3LI67</id>
    </interactant>
    <interactant intactId="EBI-10245291">
        <id>Q5T5A8</id>
        <label>LCE3C</label>
    </interactant>
    <organismsDiffer>false</organismsDiffer>
    <experiments>3</experiments>
</comment>
<comment type="interaction">
    <interactant intactId="EBI-22311199">
        <id>Q3LI67</id>
    </interactant>
    <interactant intactId="EBI-6658837">
        <id>Q9BYE3</id>
        <label>LCE3D</label>
    </interactant>
    <organismsDiffer>false</organismsDiffer>
    <experiments>3</experiments>
</comment>
<comment type="interaction">
    <interactant intactId="EBI-22311199">
        <id>Q3LI67</id>
    </interactant>
    <interactant intactId="EBI-10245456">
        <id>Q5T5B0</id>
        <label>LCE3E</label>
    </interactant>
    <organismsDiffer>false</organismsDiffer>
    <experiments>3</experiments>
</comment>
<comment type="interaction">
    <interactant intactId="EBI-22311199">
        <id>Q3LI67</id>
    </interactant>
    <interactant intactId="EBI-11955689">
        <id>Q5TCM9</id>
        <label>LCE5A</label>
    </interactant>
    <organismsDiffer>false</organismsDiffer>
    <experiments>3</experiments>
</comment>
<comment type="interaction">
    <interactant intactId="EBI-22311199">
        <id>Q3LI67</id>
    </interactant>
    <interactant intactId="EBI-12130578">
        <id>O00182-2</id>
        <label>LGALS9</label>
    </interactant>
    <organismsDiffer>false</organismsDiffer>
    <experiments>3</experiments>
</comment>
<comment type="interaction">
    <interactant intactId="EBI-22311199">
        <id>Q3LI67</id>
    </interactant>
    <interactant intactId="EBI-739832">
        <id>Q8TBB1</id>
        <label>LNX1</label>
    </interactant>
    <organismsDiffer>false</organismsDiffer>
    <experiments>3</experiments>
</comment>
<comment type="interaction">
    <interactant intactId="EBI-22311199">
        <id>Q3LI67</id>
    </interactant>
    <interactant intactId="EBI-716006">
        <id>Q9Y5V3</id>
        <label>MAGED1</label>
    </interactant>
    <organismsDiffer>false</organismsDiffer>
    <experiments>3</experiments>
</comment>
<comment type="interaction">
    <interactant intactId="EBI-22311199">
        <id>Q3LI67</id>
    </interactant>
    <interactant intactId="EBI-741424">
        <id>Q8NDC0</id>
        <label>MAPK1IP1L</label>
    </interactant>
    <organismsDiffer>false</organismsDiffer>
    <experiments>3</experiments>
</comment>
<comment type="interaction">
    <interactant intactId="EBI-22311199">
        <id>Q3LI67</id>
    </interactant>
    <interactant intactId="EBI-947402">
        <id>O60336</id>
        <label>MAPKBP1</label>
    </interactant>
    <organismsDiffer>false</organismsDiffer>
    <experiments>3</experiments>
</comment>
<comment type="interaction">
    <interactant intactId="EBI-22311199">
        <id>Q3LI67</id>
    </interactant>
    <interactant intactId="EBI-11989378">
        <id>Q8NHZ7</id>
        <label>MBD3L2</label>
    </interactant>
    <organismsDiffer>false</organismsDiffer>
    <experiments>3</experiments>
</comment>
<comment type="interaction">
    <interactant intactId="EBI-22311199">
        <id>Q3LI67</id>
    </interactant>
    <interactant intactId="EBI-394558">
        <id>Q71SY5</id>
        <label>MED25</label>
    </interactant>
    <organismsDiffer>false</organismsDiffer>
    <experiments>3</experiments>
</comment>
<comment type="interaction">
    <interactant intactId="EBI-22311199">
        <id>Q3LI67</id>
    </interactant>
    <interactant intactId="EBI-8025850">
        <id>O14770-4</id>
        <label>MEIS2</label>
    </interactant>
    <organismsDiffer>false</organismsDiffer>
    <experiments>3</experiments>
</comment>
<comment type="interaction">
    <interactant intactId="EBI-22311199">
        <id>Q3LI67</id>
    </interactant>
    <interactant intactId="EBI-16439278">
        <id>Q6FHY5</id>
        <label>MEOX2</label>
    </interactant>
    <organismsDiffer>false</organismsDiffer>
    <experiments>3</experiments>
</comment>
<comment type="interaction">
    <interactant intactId="EBI-22311199">
        <id>Q3LI67</id>
    </interactant>
    <interactant intactId="EBI-12386190">
        <id>Q96S42</id>
        <label>NODAL</label>
    </interactant>
    <organismsDiffer>false</organismsDiffer>
    <experiments>3</experiments>
</comment>
<comment type="interaction">
    <interactant intactId="EBI-22311199">
        <id>Q3LI67</id>
    </interactant>
    <interactant intactId="EBI-17490746">
        <id>A8MTQ0</id>
        <label>NOTO</label>
    </interactant>
    <organismsDiffer>false</organismsDiffer>
    <experiments>3</experiments>
</comment>
<comment type="interaction">
    <interactant intactId="EBI-22311199">
        <id>Q3LI67</id>
    </interactant>
    <interactant intactId="EBI-13644623">
        <id>Q92570</id>
        <label>NR4A3</label>
    </interactant>
    <organismsDiffer>false</organismsDiffer>
    <experiments>3</experiments>
</comment>
<comment type="interaction">
    <interactant intactId="EBI-22311199">
        <id>Q3LI67</id>
    </interactant>
    <interactant intactId="EBI-10225049">
        <id>Q7RTU3</id>
        <label>OLIG3</label>
    </interactant>
    <organismsDiffer>false</organismsDiffer>
    <experiments>3</experiments>
</comment>
<comment type="interaction">
    <interactant intactId="EBI-22311199">
        <id>Q3LI67</id>
    </interactant>
    <interactant intactId="EBI-740446">
        <id>P32242</id>
        <label>OTX1</label>
    </interactant>
    <organismsDiffer>false</organismsDiffer>
    <experiments>3</experiments>
</comment>
<comment type="interaction">
    <interactant intactId="EBI-22311199">
        <id>Q3LI67</id>
    </interactant>
    <interactant intactId="EBI-12813389">
        <id>Q8TDS5</id>
        <label>OXER1</label>
    </interactant>
    <organismsDiffer>false</organismsDiffer>
    <experiments>3</experiments>
</comment>
<comment type="interaction">
    <interactant intactId="EBI-22311199">
        <id>Q3LI67</id>
    </interactant>
    <interactant intactId="EBI-395883">
        <id>P07237</id>
        <label>P4HB</label>
    </interactant>
    <organismsDiffer>false</organismsDiffer>
    <experiments>3</experiments>
</comment>
<comment type="interaction">
    <interactant intactId="EBI-22311199">
        <id>Q3LI67</id>
    </interactant>
    <interactant intactId="EBI-11022007">
        <id>Q9HBE1-4</id>
        <label>PATZ1</label>
    </interactant>
    <organismsDiffer>false</organismsDiffer>
    <experiments>3</experiments>
</comment>
<comment type="interaction">
    <interactant intactId="EBI-22311199">
        <id>Q3LI67</id>
    </interactant>
    <interactant intactId="EBI-10329013">
        <id>Q9Y5E9</id>
        <label>PCDHB14</label>
    </interactant>
    <organismsDiffer>false</organismsDiffer>
    <experiments>3</experiments>
</comment>
<comment type="interaction">
    <interactant intactId="EBI-22311199">
        <id>Q3LI67</id>
    </interactant>
    <interactant intactId="EBI-10310808">
        <id>Q9HCN3</id>
        <label>PGAP6</label>
    </interactant>
    <organismsDiffer>false</organismsDiffer>
    <experiments>3</experiments>
</comment>
<comment type="interaction">
    <interactant intactId="EBI-22311199">
        <id>Q3LI67</id>
    </interactant>
    <interactant intactId="EBI-14131832">
        <id>Q8N4B1-4</id>
        <label>PHETA1</label>
    </interactant>
    <organismsDiffer>false</organismsDiffer>
    <experiments>3</experiments>
</comment>
<comment type="interaction">
    <interactant intactId="EBI-22311199">
        <id>Q3LI67</id>
    </interactant>
    <interactant intactId="EBI-14084211">
        <id>A2BDE7</id>
        <label>PHLDA1</label>
    </interactant>
    <organismsDiffer>false</organismsDiffer>
    <experiments>3</experiments>
</comment>
<comment type="interaction">
    <interactant intactId="EBI-22311199">
        <id>Q3LI67</id>
    </interactant>
    <interactant intactId="EBI-2908273">
        <id>Q96S52</id>
        <label>PIGS</label>
    </interactant>
    <organismsDiffer>false</organismsDiffer>
    <experiments>3</experiments>
</comment>
<comment type="interaction">
    <interactant intactId="EBI-22311199">
        <id>Q3LI67</id>
    </interactant>
    <interactant intactId="EBI-748265">
        <id>P78337</id>
        <label>PITX1</label>
    </interactant>
    <organismsDiffer>false</organismsDiffer>
    <experiments>3</experiments>
</comment>
<comment type="interaction">
    <interactant intactId="EBI-22311199">
        <id>Q3LI67</id>
    </interactant>
    <interactant intactId="EBI-769257">
        <id>Q9NRQ2</id>
        <label>PLSCR4</label>
    </interactant>
    <organismsDiffer>false</organismsDiffer>
    <experiments>3</experiments>
</comment>
<comment type="interaction">
    <interactant intactId="EBI-22311199">
        <id>Q3LI67</id>
    </interactant>
    <interactant intactId="EBI-17236143">
        <id>Q12837</id>
        <label>POU4F2</label>
    </interactant>
    <organismsDiffer>false</organismsDiffer>
    <experiments>3</experiments>
</comment>
<comment type="interaction">
    <interactant intactId="EBI-22311199">
        <id>Q3LI67</id>
    </interactant>
    <interactant intactId="EBI-12033574">
        <id>Q15319</id>
        <label>POU4F3</label>
    </interactant>
    <organismsDiffer>false</organismsDiffer>
    <experiments>3</experiments>
</comment>
<comment type="interaction">
    <interactant intactId="EBI-22311199">
        <id>Q3LI67</id>
    </interactant>
    <interactant intactId="EBI-5235692">
        <id>O75864</id>
        <label>PPP1R37</label>
    </interactant>
    <organismsDiffer>false</organismsDiffer>
    <experiments>3</experiments>
</comment>
<comment type="interaction">
    <interactant intactId="EBI-22311199">
        <id>Q3LI67</id>
    </interactant>
    <interactant intactId="EBI-745545">
        <id>Q9NR22</id>
        <label>PRMT8</label>
    </interactant>
    <organismsDiffer>false</organismsDiffer>
    <experiments>3</experiments>
</comment>
<comment type="interaction">
    <interactant intactId="EBI-22311199">
        <id>Q3LI67</id>
    </interactant>
    <interactant intactId="EBI-9027467">
        <id>O75360</id>
        <label>PROP1</label>
    </interactant>
    <organismsDiffer>false</organismsDiffer>
    <experiments>3</experiments>
</comment>
<comment type="interaction">
    <interactant intactId="EBI-22311199">
        <id>Q3LI67</id>
    </interactant>
    <interactant intactId="EBI-1567797">
        <id>Q8WWY3</id>
        <label>PRPF31</label>
    </interactant>
    <organismsDiffer>false</organismsDiffer>
    <experiments>3</experiments>
</comment>
<comment type="interaction">
    <interactant intactId="EBI-22311199">
        <id>Q3LI67</id>
    </interactant>
    <interactant intactId="EBI-740924">
        <id>Q9NZ81</id>
        <label>PRR13</label>
    </interactant>
    <organismsDiffer>false</organismsDiffer>
    <experiments>3</experiments>
</comment>
<comment type="interaction">
    <interactant intactId="EBI-22311199">
        <id>Q3LI67</id>
    </interactant>
    <interactant intactId="EBI-2803328">
        <id>P79522</id>
        <label>PRR3</label>
    </interactant>
    <organismsDiffer>false</organismsDiffer>
    <experiments>3</experiments>
</comment>
<comment type="interaction">
    <interactant intactId="EBI-22311199">
        <id>Q3LI67</id>
    </interactant>
    <interactant intactId="EBI-11986293">
        <id>P0CG20</id>
        <label>PRR35</label>
    </interactant>
    <organismsDiffer>false</organismsDiffer>
    <experiments>3</experiments>
</comment>
<comment type="interaction">
    <interactant intactId="EBI-22311199">
        <id>Q3LI67</id>
    </interactant>
    <interactant intactId="EBI-359352">
        <id>P25786</id>
        <label>PSMA1</label>
    </interactant>
    <organismsDiffer>false</organismsDiffer>
    <experiments>3</experiments>
</comment>
<comment type="interaction">
    <interactant intactId="EBI-22311199">
        <id>Q3LI67</id>
    </interactant>
    <interactant intactId="EBI-3919694">
        <id>P15151</id>
        <label>PVR</label>
    </interactant>
    <organismsDiffer>false</organismsDiffer>
    <experiments>3</experiments>
</comment>
<comment type="interaction">
    <interactant intactId="EBI-22311199">
        <id>Q3LI67</id>
    </interactant>
    <interactant intactId="EBI-743796">
        <id>Q8TBN0</id>
        <label>RAB3IL1</label>
    </interactant>
    <organismsDiffer>false</organismsDiffer>
    <experiments>3</experiments>
</comment>
<comment type="interaction">
    <interactant intactId="EBI-22311199">
        <id>Q3LI67</id>
    </interactant>
    <interactant intactId="EBI-948156">
        <id>Q9Y4B4</id>
        <label>RAD54L2</label>
    </interactant>
    <organismsDiffer>false</organismsDiffer>
    <experiments>3</experiments>
</comment>
<comment type="interaction">
    <interactant intactId="EBI-22311199">
        <id>Q3LI67</id>
    </interactant>
    <interactant intactId="EBI-740818">
        <id>Q9Y272</id>
        <label>RASD1</label>
    </interactant>
    <organismsDiffer>false</organismsDiffer>
    <experiments>3</experiments>
</comment>
<comment type="interaction">
    <interactant intactId="EBI-22311199">
        <id>Q3LI67</id>
    </interactant>
    <interactant intactId="EBI-12104986">
        <id>O75783</id>
        <label>RHBDL1</label>
    </interactant>
    <organismsDiffer>false</organismsDiffer>
    <experiments>3</experiments>
</comment>
<comment type="interaction">
    <interactant intactId="EBI-22311199">
        <id>Q3LI67</id>
    </interactant>
    <interactant intactId="EBI-11984663">
        <id>Q06455-2</id>
        <label>RUNX1T1</label>
    </interactant>
    <organismsDiffer>false</organismsDiffer>
    <experiments>3</experiments>
</comment>
<comment type="interaction">
    <interactant intactId="EBI-22311199">
        <id>Q3LI67</id>
    </interactant>
    <interactant intactId="EBI-12148649">
        <id>Q7Z3H4</id>
        <label>SAMD7</label>
    </interactant>
    <organismsDiffer>false</organismsDiffer>
    <experiments>3</experiments>
</comment>
<comment type="interaction">
    <interactant intactId="EBI-22311199">
        <id>Q3LI67</id>
    </interactant>
    <interactant intactId="EBI-12000762">
        <id>Q7Z5V6-2</id>
        <label>SAXO4</label>
    </interactant>
    <organismsDiffer>false</organismsDiffer>
    <experiments>3</experiments>
</comment>
<comment type="interaction">
    <interactant intactId="EBI-22311199">
        <id>Q3LI67</id>
    </interactant>
    <interactant intactId="EBI-12021638">
        <id>Q8NA69</id>
        <label>SAXO5</label>
    </interactant>
    <organismsDiffer>false</organismsDiffer>
    <experiments>3</experiments>
</comment>
<comment type="interaction">
    <interactant intactId="EBI-22311199">
        <id>Q3LI67</id>
    </interactant>
    <interactant intactId="EBI-10303490">
        <id>Q9C0C4</id>
        <label>SEMA4C</label>
    </interactant>
    <organismsDiffer>false</organismsDiffer>
    <experiments>3</experiments>
</comment>
<comment type="interaction">
    <interactant intactId="EBI-22311199">
        <id>Q3LI67</id>
    </interactant>
    <interactant intactId="EBI-346595">
        <id>Q96B97</id>
        <label>SH3KBP1</label>
    </interactant>
    <organismsDiffer>false</organismsDiffer>
    <experiments>3</experiments>
</comment>
<comment type="interaction">
    <interactant intactId="EBI-22311199">
        <id>Q3LI67</id>
    </interactant>
    <interactant intactId="EBI-12806032">
        <id>Q16348</id>
        <label>SLC15A2</label>
    </interactant>
    <organismsDiffer>false</organismsDiffer>
    <experiments>3</experiments>
</comment>
<comment type="interaction">
    <interactant intactId="EBI-22311199">
        <id>Q3LI67</id>
    </interactant>
    <interactant intactId="EBI-9846338">
        <id>O76082</id>
        <label>SLC22A5</label>
    </interactant>
    <organismsDiffer>false</organismsDiffer>
    <experiments>3</experiments>
</comment>
<comment type="interaction">
    <interactant intactId="EBI-22311199">
        <id>Q3LI67</id>
    </interactant>
    <interactant intactId="EBI-355653">
        <id>Q92922</id>
        <label>SMARCC1</label>
    </interactant>
    <organismsDiffer>false</organismsDiffer>
    <experiments>3</experiments>
</comment>
<comment type="interaction">
    <interactant intactId="EBI-22311199">
        <id>Q3LI67</id>
    </interactant>
    <interactant intactId="EBI-455078">
        <id>Q969G3</id>
        <label>SMARCE1</label>
    </interactant>
    <organismsDiffer>false</organismsDiffer>
    <experiments>3</experiments>
</comment>
<comment type="interaction">
    <interactant intactId="EBI-22311199">
        <id>Q3LI67</id>
    </interactant>
    <interactant intactId="EBI-750494">
        <id>P49901</id>
        <label>SMCP</label>
    </interactant>
    <organismsDiffer>false</organismsDiffer>
    <experiments>3</experiments>
</comment>
<comment type="interaction">
    <interactant intactId="EBI-22311199">
        <id>Q3LI67</id>
    </interactant>
    <interactant intactId="EBI-372475">
        <id>P14678-2</id>
        <label>SNRPB</label>
    </interactant>
    <organismsDiffer>false</organismsDiffer>
    <experiments>3</experiments>
</comment>
<comment type="interaction">
    <interactant intactId="EBI-22311199">
        <id>Q3LI67</id>
    </interactant>
    <interactant intactId="EBI-766589">
        <id>P09234</id>
        <label>SNRPC</label>
    </interactant>
    <organismsDiffer>false</organismsDiffer>
    <experiments>3</experiments>
</comment>
<comment type="interaction">
    <interactant intactId="EBI-22311199">
        <id>Q3LI67</id>
    </interactant>
    <interactant intactId="EBI-298169">
        <id>Q96RF0</id>
        <label>SNX18</label>
    </interactant>
    <organismsDiffer>false</organismsDiffer>
    <experiments>3</experiments>
</comment>
<comment type="interaction">
    <interactant intactId="EBI-22311199">
        <id>Q3LI67</id>
    </interactant>
    <interactant intactId="EBI-749295">
        <id>O75716</id>
        <label>STK16</label>
    </interactant>
    <organismsDiffer>false</organismsDiffer>
    <experiments>3</experiments>
</comment>
<comment type="interaction">
    <interactant intactId="EBI-22311199">
        <id>Q3LI67</id>
    </interactant>
    <interactant intactId="EBI-12140683">
        <id>Q9BX79-6</id>
        <label>STRA6</label>
    </interactant>
    <organismsDiffer>false</organismsDiffer>
    <experiments>3</experiments>
</comment>
<comment type="interaction">
    <interactant intactId="EBI-22311199">
        <id>Q3LI67</id>
    </interactant>
    <interactant intactId="EBI-352832">
        <id>Q9UL54</id>
        <label>TAOK2</label>
    </interactant>
    <organismsDiffer>false</organismsDiffer>
    <experiments>3</experiments>
</comment>
<comment type="interaction">
    <interactant intactId="EBI-22311199">
        <id>Q3LI67</id>
    </interactant>
    <interactant intactId="EBI-2853051">
        <id>Q13207</id>
        <label>TBX2</label>
    </interactant>
    <organismsDiffer>false</organismsDiffer>
    <experiments>3</experiments>
</comment>
<comment type="interaction">
    <interactant intactId="EBI-22311199">
        <id>Q3LI67</id>
    </interactant>
    <interactant intactId="EBI-2824328">
        <id>O95947</id>
        <label>TBX6</label>
    </interactant>
    <organismsDiffer>false</organismsDiffer>
    <experiments>3</experiments>
</comment>
<comment type="interaction">
    <interactant intactId="EBI-22311199">
        <id>Q3LI67</id>
    </interactant>
    <interactant intactId="EBI-11974855">
        <id>Q9Y4C2-2</id>
        <label>TCAF1</label>
    </interactant>
    <organismsDiffer>false</organismsDiffer>
    <experiments>3</experiments>
</comment>
<comment type="interaction">
    <interactant intactId="EBI-22311199">
        <id>Q3LI67</id>
    </interactant>
    <interactant intactId="EBI-11746252">
        <id>Q9NQB0-10</id>
        <label>TCF7L2</label>
    </interactant>
    <organismsDiffer>false</organismsDiffer>
    <experiments>3</experiments>
</comment>
<comment type="interaction">
    <interactant intactId="EBI-22311199">
        <id>Q3LI67</id>
    </interactant>
    <interactant intactId="EBI-750487">
        <id>Q8WW24</id>
        <label>TEKT4</label>
    </interactant>
    <organismsDiffer>false</organismsDiffer>
    <experiments>3</experiments>
</comment>
<comment type="interaction">
    <interactant intactId="EBI-22311199">
        <id>Q3LI67</id>
    </interactant>
    <interactant intactId="EBI-2802204">
        <id>Q6PIY7</id>
        <label>TENT2</label>
    </interactant>
    <organismsDiffer>false</organismsDiffer>
    <experiments>3</experiments>
</comment>
<comment type="interaction">
    <interactant intactId="EBI-22311199">
        <id>Q3LI67</id>
    </interactant>
    <interactant intactId="EBI-11952651">
        <id>Q7Z6R9</id>
        <label>TFAP2D</label>
    </interactant>
    <organismsDiffer>false</organismsDiffer>
    <experiments>3</experiments>
</comment>
<comment type="interaction">
    <interactant intactId="EBI-22311199">
        <id>Q3LI67</id>
    </interactant>
    <interactant intactId="EBI-11741437">
        <id>Q08117-2</id>
        <label>TLE5</label>
    </interactant>
    <organismsDiffer>false</organismsDiffer>
    <experiments>3</experiments>
</comment>
<comment type="interaction">
    <interactant intactId="EBI-22311199">
        <id>Q3LI67</id>
    </interactant>
    <interactant intactId="EBI-3939165">
        <id>O43711</id>
        <label>TLX3</label>
    </interactant>
    <organismsDiffer>false</organismsDiffer>
    <experiments>3</experiments>
</comment>
<comment type="interaction">
    <interactant intactId="EBI-22311199">
        <id>Q3LI67</id>
    </interactant>
    <interactant intactId="EBI-357849">
        <id>Q15025</id>
        <label>TNIP1</label>
    </interactant>
    <organismsDiffer>false</organismsDiffer>
    <experiments>3</experiments>
</comment>
<comment type="interaction">
    <interactant intactId="EBI-22311199">
        <id>Q3LI67</id>
    </interactant>
    <interactant intactId="EBI-949753">
        <id>Q63HR2</id>
        <label>TNS2</label>
    </interactant>
    <organismsDiffer>false</organismsDiffer>
    <experiments>3</experiments>
</comment>
<comment type="interaction">
    <interactant intactId="EBI-22311199">
        <id>Q3LI67</id>
    </interactant>
    <interactant intactId="EBI-12023322">
        <id>Q8N831</id>
        <label>TSPYL6</label>
    </interactant>
    <organismsDiffer>false</organismsDiffer>
    <experiments>3</experiments>
</comment>
<comment type="interaction">
    <interactant intactId="EBI-22311199">
        <id>Q3LI67</id>
    </interactant>
    <interactant intactId="EBI-1383454">
        <id>P29597</id>
        <label>TYK2</label>
    </interactant>
    <organismsDiffer>false</organismsDiffer>
    <experiments>3</experiments>
</comment>
<comment type="interaction">
    <interactant intactId="EBI-22311199">
        <id>Q3LI67</id>
    </interactant>
    <interactant intactId="EBI-10249550">
        <id>Q6EMK4</id>
        <label>VASN</label>
    </interactant>
    <organismsDiffer>false</organismsDiffer>
    <experiments>3</experiments>
</comment>
<comment type="interaction">
    <interactant intactId="EBI-22311199">
        <id>Q3LI67</id>
    </interactant>
    <interactant intactId="EBI-10191303">
        <id>O95231</id>
        <label>VENTX</label>
    </interactant>
    <organismsDiffer>false</organismsDiffer>
    <experiments>3</experiments>
</comment>
<comment type="interaction">
    <interactant intactId="EBI-22311199">
        <id>Q3LI67</id>
    </interactant>
    <interactant intactId="EBI-4311759">
        <id>Q8IW00</id>
        <label>VSTM4</label>
    </interactant>
    <organismsDiffer>false</organismsDiffer>
    <experiments>3</experiments>
</comment>
<comment type="interaction">
    <interactant intactId="EBI-22311199">
        <id>Q3LI67</id>
    </interactant>
    <interactant intactId="EBI-12032042">
        <id>Q64LD2-2</id>
        <label>WDR25</label>
    </interactant>
    <organismsDiffer>false</organismsDiffer>
    <experiments>3</experiments>
</comment>
<comment type="interaction">
    <interactant intactId="EBI-22311199">
        <id>Q3LI67</id>
    </interactant>
    <interactant intactId="EBI-10188476">
        <id>A0A0C4DGF1</id>
        <label>ZBTB32</label>
    </interactant>
    <organismsDiffer>false</organismsDiffer>
    <experiments>3</experiments>
</comment>
<comment type="interaction">
    <interactant intactId="EBI-22311199">
        <id>Q3LI67</id>
    </interactant>
    <interactant intactId="EBI-11963196">
        <id>Q15915</id>
        <label>ZIC1</label>
    </interactant>
    <organismsDiffer>false</organismsDiffer>
    <experiments>3</experiments>
</comment>
<comment type="interaction">
    <interactant intactId="EBI-22311199">
        <id>Q3LI67</id>
    </interactant>
    <interactant intactId="EBI-744257">
        <id>Q96IQ9</id>
        <label>ZNF414</label>
    </interactant>
    <organismsDiffer>false</organismsDiffer>
    <experiments>3</experiments>
</comment>
<comment type="interaction">
    <interactant intactId="EBI-22311199">
        <id>Q3LI67</id>
    </interactant>
    <interactant intactId="EBI-10486136">
        <id>Q6ZNH5</id>
        <label>ZNF497</label>
    </interactant>
    <organismsDiffer>false</organismsDiffer>
    <experiments>3</experiments>
</comment>
<comment type="interaction">
    <interactant intactId="EBI-22311199">
        <id>Q3LI67</id>
    </interactant>
    <interactant intactId="EBI-14069183">
        <id>Q86XF7</id>
        <label>ZNF575</label>
    </interactant>
    <organismsDiffer>false</organismsDiffer>
    <experiments>3</experiments>
</comment>
<comment type="interaction">
    <interactant intactId="EBI-22311199">
        <id>Q3LI67</id>
    </interactant>
    <interactant intactId="EBI-10237274">
        <id>Q15937</id>
        <label>ZNF79</label>
    </interactant>
    <organismsDiffer>false</organismsDiffer>
    <experiments>3</experiments>
</comment>
<comment type="similarity">
    <text evidence="3">Belongs to the KRTAP type 6 family.</text>
</comment>
<comment type="caution">
    <text evidence="3">It is uncertain whether Met-1 or Met-8 is the initiator.</text>
</comment>
<dbReference type="EMBL" id="AB096951">
    <property type="protein sequence ID" value="BAE46366.1"/>
    <property type="molecule type" value="mRNA"/>
</dbReference>
<dbReference type="EMBL" id="BC101121">
    <property type="protein sequence ID" value="AAI01122.1"/>
    <property type="molecule type" value="mRNA"/>
</dbReference>
<dbReference type="EMBL" id="BC118547">
    <property type="protein sequence ID" value="AAI18548.1"/>
    <property type="molecule type" value="mRNA"/>
</dbReference>
<dbReference type="EMBL" id="BC118624">
    <property type="protein sequence ID" value="AAI18625.1"/>
    <property type="molecule type" value="mRNA"/>
</dbReference>
<dbReference type="RefSeq" id="NP_853636.3">
    <property type="nucleotide sequence ID" value="NM_181605.3"/>
</dbReference>
<dbReference type="FunCoup" id="Q3LI67">
    <property type="interactions" value="6"/>
</dbReference>
<dbReference type="IntAct" id="Q3LI67">
    <property type="interactions" value="158"/>
</dbReference>
<dbReference type="STRING" id="9606.ENSP00000375482"/>
<dbReference type="BioMuta" id="KRTAP6-3"/>
<dbReference type="DMDM" id="209572739"/>
<dbReference type="PaxDb" id="9606-ENSP00000375482"/>
<dbReference type="Antibodypedia" id="81640">
    <property type="antibodies" value="1 antibodies from 1 providers"/>
</dbReference>
<dbReference type="Ensembl" id="ENST00000391624.1">
    <property type="protein sequence ID" value="ENSP00000375482.2"/>
    <property type="gene ID" value="ENSG00000212938.3"/>
</dbReference>
<dbReference type="MANE-Select" id="ENST00000391624.2">
    <property type="protein sequence ID" value="ENSP00000375482.3"/>
    <property type="RefSeq nucleotide sequence ID" value="NM_001433434.1"/>
    <property type="RefSeq protein sequence ID" value="NP_001420363.1"/>
</dbReference>
<dbReference type="UCSC" id="uc002yom.4">
    <property type="organism name" value="human"/>
</dbReference>
<dbReference type="AGR" id="HGNC:18933"/>
<dbReference type="GeneCards" id="KRTAP6-3"/>
<dbReference type="HGNC" id="HGNC:18933">
    <property type="gene designation" value="KRTAP6-3"/>
</dbReference>
<dbReference type="HPA" id="ENSG00000212938">
    <property type="expression patterns" value="Not detected"/>
</dbReference>
<dbReference type="neXtProt" id="NX_Q3LI67"/>
<dbReference type="OpenTargets" id="ENSG00000212938"/>
<dbReference type="VEuPathDB" id="HostDB:ENSG00000212938"/>
<dbReference type="eggNOG" id="ENOG502TEMB">
    <property type="taxonomic scope" value="Eukaryota"/>
</dbReference>
<dbReference type="GeneTree" id="ENSGT01130000279327"/>
<dbReference type="HOGENOM" id="CLU_182642_0_0_1"/>
<dbReference type="InParanoid" id="Q3LI67"/>
<dbReference type="OMA" id="YRNYNGG"/>
<dbReference type="PAN-GO" id="Q3LI67">
    <property type="GO annotations" value="0 GO annotations based on evolutionary models"/>
</dbReference>
<dbReference type="PathwayCommons" id="Q3LI67"/>
<dbReference type="Reactome" id="R-HSA-6805567">
    <property type="pathway name" value="Keratinization"/>
</dbReference>
<dbReference type="Pharos" id="Q3LI67">
    <property type="development level" value="Tdark"/>
</dbReference>
<dbReference type="PRO" id="PR:Q3LI67"/>
<dbReference type="Proteomes" id="UP000005640">
    <property type="component" value="Chromosome 21"/>
</dbReference>
<dbReference type="RNAct" id="Q3LI67">
    <property type="molecule type" value="protein"/>
</dbReference>
<dbReference type="Bgee" id="ENSG00000212938">
    <property type="expression patterns" value="Expressed in primordial germ cell in gonad"/>
</dbReference>
<dbReference type="GO" id="GO:0005829">
    <property type="term" value="C:cytosol"/>
    <property type="evidence" value="ECO:0000304"/>
    <property type="project" value="Reactome"/>
</dbReference>
<dbReference type="GO" id="GO:0005882">
    <property type="term" value="C:intermediate filament"/>
    <property type="evidence" value="ECO:0007669"/>
    <property type="project" value="UniProtKB-KW"/>
</dbReference>
<dbReference type="GO" id="GO:0031424">
    <property type="term" value="P:keratinization"/>
    <property type="evidence" value="ECO:0007669"/>
    <property type="project" value="InterPro"/>
</dbReference>
<dbReference type="InterPro" id="IPR040313">
    <property type="entry name" value="KAP6"/>
</dbReference>
<dbReference type="PANTHER" id="PTHR31678">
    <property type="entry name" value="KERATIN-ASSOCIATED PROTEIN 6-3"/>
    <property type="match status" value="1"/>
</dbReference>
<dbReference type="PANTHER" id="PTHR31678:SF6">
    <property type="entry name" value="KERATIN-ASSOCIATED PROTEIN 6-3"/>
    <property type="match status" value="1"/>
</dbReference>
<feature type="chain" id="PRO_0000223900" description="Keratin-associated protein 6-3">
    <location>
        <begin position="1"/>
        <end position="110"/>
    </location>
</feature>
<feature type="sequence variant" id="VAR_060046" description="In dbSNP:rs9305426." evidence="2">
    <original>Y</original>
    <variation>S</variation>
    <location>
        <position position="51"/>
    </location>
</feature>
<feature type="sequence variant" id="VAR_047018" description="In dbSNP:rs867876654.">
    <original>Y</original>
    <variation>S</variation>
    <location>
        <position position="58"/>
    </location>
</feature>
<feature type="sequence conflict" description="In Ref. 1; BAE46366." evidence="3" ref="1">
    <original>G</original>
    <variation>R</variation>
    <location>
        <position position="45"/>
    </location>
</feature>
<protein>
    <recommendedName>
        <fullName evidence="3">Keratin-associated protein 6-3</fullName>
    </recommendedName>
</protein>
<evidence type="ECO:0000250" key="1"/>
<evidence type="ECO:0000269" key="2">
    <source>
    </source>
</evidence>
<evidence type="ECO:0000305" key="3"/>
<evidence type="ECO:0000312" key="4">
    <source>
        <dbReference type="HGNC" id="HGNC:18933"/>
    </source>
</evidence>
<gene>
    <name evidence="4" type="primary">KRTAP6-3</name>
    <name type="synonym">KAP6.3</name>
</gene>
<proteinExistence type="evidence at protein level"/>
<reference key="1">
    <citation type="submission" date="2002-11" db="EMBL/GenBank/DDBJ databases">
        <title>Identification of complete keratin-associated protein (KAP) gene cluster spanning 800 kb region on human chromosome 21q22.11.</title>
        <authorList>
            <person name="Obayashi I."/>
            <person name="Shibuya K."/>
            <person name="Minoshima S."/>
            <person name="Kudoh J."/>
            <person name="Shimizu N."/>
        </authorList>
    </citation>
    <scope>NUCLEOTIDE SEQUENCE [MRNA]</scope>
    <source>
        <tissue>Hair root</tissue>
    </source>
</reference>
<reference key="2">
    <citation type="journal article" date="2004" name="Genome Res.">
        <title>The status, quality, and expansion of the NIH full-length cDNA project: the Mammalian Gene Collection (MGC).</title>
        <authorList>
            <consortium name="The MGC Project Team"/>
        </authorList>
    </citation>
    <scope>NUCLEOTIDE SEQUENCE [LARGE SCALE MRNA] OF 8-110</scope>
    <scope>VARIANT SER-51</scope>
</reference>
<name>KRA63_HUMAN</name>
<accession>Q3LI67</accession>
<accession>A4IF26</accession>
<accession>A4QMZ2</accession>
<keyword id="KW-0416">Keratin</keyword>
<keyword id="KW-1185">Reference proteome</keyword>
<keyword id="KW-0677">Repeat</keyword>
<sequence>MTSTTNTMCGSYYRNYNGGHGYGCCGYGGLGCGYGGCGYGCCGYGGLGFGYGGLDCGYGGLGCGYGSFCGCGYRGLDCGYGCGYGYVSHSFCGCGYRCGSGYGSSFGYYY</sequence>
<organism>
    <name type="scientific">Homo sapiens</name>
    <name type="common">Human</name>
    <dbReference type="NCBI Taxonomy" id="9606"/>
    <lineage>
        <taxon>Eukaryota</taxon>
        <taxon>Metazoa</taxon>
        <taxon>Chordata</taxon>
        <taxon>Craniata</taxon>
        <taxon>Vertebrata</taxon>
        <taxon>Euteleostomi</taxon>
        <taxon>Mammalia</taxon>
        <taxon>Eutheria</taxon>
        <taxon>Euarchontoglires</taxon>
        <taxon>Primates</taxon>
        <taxon>Haplorrhini</taxon>
        <taxon>Catarrhini</taxon>
        <taxon>Hominidae</taxon>
        <taxon>Homo</taxon>
    </lineage>
</organism>